<sequence>MMSDPNNAPQDHDSGIVLASASPRRSQLLAGVGIAFDVVPSDAPEESVPEETPQQHAIRLSLLKAREVANRPEVKGRWFIGSDTIVVRDATILGKPRDARDAADMLGSLSGRSHCVISGYAVLDRITGKEVADAVTTVVRFRKLTDEEIQGYIATGEPFGKAGAYAIQGIGACMIPAIEGSYTNVVGLPLCEVVETLERLGAVRLFASDRPLCAHLDPPA</sequence>
<gene>
    <name type="ordered locus">Pcar_0404</name>
</gene>
<proteinExistence type="inferred from homology"/>
<evidence type="ECO:0000255" key="1">
    <source>
        <dbReference type="HAMAP-Rule" id="MF_00528"/>
    </source>
</evidence>
<keyword id="KW-0963">Cytoplasm</keyword>
<keyword id="KW-0378">Hydrolase</keyword>
<keyword id="KW-0546">Nucleotide metabolism</keyword>
<keyword id="KW-1185">Reference proteome</keyword>
<protein>
    <recommendedName>
        <fullName evidence="1">dTTP/UTP pyrophosphatase</fullName>
        <shortName evidence="1">dTTPase/UTPase</shortName>
        <ecNumber evidence="1">3.6.1.9</ecNumber>
    </recommendedName>
    <alternativeName>
        <fullName evidence="1">Nucleoside triphosphate pyrophosphatase</fullName>
    </alternativeName>
    <alternativeName>
        <fullName evidence="1">Nucleotide pyrophosphatase</fullName>
        <shortName evidence="1">Nucleotide PPase</shortName>
    </alternativeName>
</protein>
<accession>Q3A7I0</accession>
<organism>
    <name type="scientific">Syntrophotalea carbinolica (strain DSM 2380 / NBRC 103641 / GraBd1)</name>
    <name type="common">Pelobacter carbinolicus</name>
    <dbReference type="NCBI Taxonomy" id="338963"/>
    <lineage>
        <taxon>Bacteria</taxon>
        <taxon>Pseudomonadati</taxon>
        <taxon>Thermodesulfobacteriota</taxon>
        <taxon>Desulfuromonadia</taxon>
        <taxon>Desulfuromonadales</taxon>
        <taxon>Syntrophotaleaceae</taxon>
        <taxon>Syntrophotalea</taxon>
    </lineage>
</organism>
<dbReference type="EC" id="3.6.1.9" evidence="1"/>
<dbReference type="EMBL" id="CP000142">
    <property type="protein sequence ID" value="ABA87664.1"/>
    <property type="molecule type" value="Genomic_DNA"/>
</dbReference>
<dbReference type="RefSeq" id="WP_011340086.1">
    <property type="nucleotide sequence ID" value="NC_007498.2"/>
</dbReference>
<dbReference type="SMR" id="Q3A7I0"/>
<dbReference type="STRING" id="338963.Pcar_0404"/>
<dbReference type="KEGG" id="pca:Pcar_0404"/>
<dbReference type="eggNOG" id="COG0424">
    <property type="taxonomic scope" value="Bacteria"/>
</dbReference>
<dbReference type="HOGENOM" id="CLU_040416_0_0_7"/>
<dbReference type="OrthoDB" id="9807767at2"/>
<dbReference type="Proteomes" id="UP000002534">
    <property type="component" value="Chromosome"/>
</dbReference>
<dbReference type="GO" id="GO:0005737">
    <property type="term" value="C:cytoplasm"/>
    <property type="evidence" value="ECO:0007669"/>
    <property type="project" value="UniProtKB-SubCell"/>
</dbReference>
<dbReference type="GO" id="GO:0036218">
    <property type="term" value="F:dTTP diphosphatase activity"/>
    <property type="evidence" value="ECO:0007669"/>
    <property type="project" value="RHEA"/>
</dbReference>
<dbReference type="GO" id="GO:0036221">
    <property type="term" value="F:UTP diphosphatase activity"/>
    <property type="evidence" value="ECO:0007669"/>
    <property type="project" value="RHEA"/>
</dbReference>
<dbReference type="GO" id="GO:0009117">
    <property type="term" value="P:nucleotide metabolic process"/>
    <property type="evidence" value="ECO:0007669"/>
    <property type="project" value="UniProtKB-KW"/>
</dbReference>
<dbReference type="CDD" id="cd00555">
    <property type="entry name" value="Maf"/>
    <property type="match status" value="1"/>
</dbReference>
<dbReference type="Gene3D" id="3.90.950.10">
    <property type="match status" value="1"/>
</dbReference>
<dbReference type="HAMAP" id="MF_00528">
    <property type="entry name" value="Maf"/>
    <property type="match status" value="1"/>
</dbReference>
<dbReference type="InterPro" id="IPR029001">
    <property type="entry name" value="ITPase-like_fam"/>
</dbReference>
<dbReference type="InterPro" id="IPR003697">
    <property type="entry name" value="Maf-like"/>
</dbReference>
<dbReference type="NCBIfam" id="TIGR00172">
    <property type="entry name" value="maf"/>
    <property type="match status" value="1"/>
</dbReference>
<dbReference type="PANTHER" id="PTHR43213">
    <property type="entry name" value="BIFUNCTIONAL DTTP/UTP PYROPHOSPHATASE/METHYLTRANSFERASE PROTEIN-RELATED"/>
    <property type="match status" value="1"/>
</dbReference>
<dbReference type="PANTHER" id="PTHR43213:SF5">
    <property type="entry name" value="BIFUNCTIONAL DTTP_UTP PYROPHOSPHATASE_METHYLTRANSFERASE PROTEIN-RELATED"/>
    <property type="match status" value="1"/>
</dbReference>
<dbReference type="Pfam" id="PF02545">
    <property type="entry name" value="Maf"/>
    <property type="match status" value="1"/>
</dbReference>
<dbReference type="PIRSF" id="PIRSF006305">
    <property type="entry name" value="Maf"/>
    <property type="match status" value="1"/>
</dbReference>
<dbReference type="SUPFAM" id="SSF52972">
    <property type="entry name" value="ITPase-like"/>
    <property type="match status" value="1"/>
</dbReference>
<reference key="1">
    <citation type="submission" date="2005-10" db="EMBL/GenBank/DDBJ databases">
        <title>Complete sequence of Pelobacter carbinolicus DSM 2380.</title>
        <authorList>
            <person name="Copeland A."/>
            <person name="Lucas S."/>
            <person name="Lapidus A."/>
            <person name="Barry K."/>
            <person name="Detter J.C."/>
            <person name="Glavina T."/>
            <person name="Hammon N."/>
            <person name="Israni S."/>
            <person name="Pitluck S."/>
            <person name="Chertkov O."/>
            <person name="Schmutz J."/>
            <person name="Larimer F."/>
            <person name="Land M."/>
            <person name="Kyrpides N."/>
            <person name="Ivanova N."/>
            <person name="Richardson P."/>
        </authorList>
    </citation>
    <scope>NUCLEOTIDE SEQUENCE [LARGE SCALE GENOMIC DNA]</scope>
    <source>
        <strain>DSM 2380 / NBRC 103641 / GraBd1</strain>
    </source>
</reference>
<comment type="function">
    <text evidence="1">Nucleoside triphosphate pyrophosphatase that hydrolyzes dTTP and UTP. May have a dual role in cell division arrest and in preventing the incorporation of modified nucleotides into cellular nucleic acids.</text>
</comment>
<comment type="catalytic activity">
    <reaction evidence="1">
        <text>dTTP + H2O = dTMP + diphosphate + H(+)</text>
        <dbReference type="Rhea" id="RHEA:28534"/>
        <dbReference type="ChEBI" id="CHEBI:15377"/>
        <dbReference type="ChEBI" id="CHEBI:15378"/>
        <dbReference type="ChEBI" id="CHEBI:33019"/>
        <dbReference type="ChEBI" id="CHEBI:37568"/>
        <dbReference type="ChEBI" id="CHEBI:63528"/>
        <dbReference type="EC" id="3.6.1.9"/>
    </reaction>
</comment>
<comment type="catalytic activity">
    <reaction evidence="1">
        <text>UTP + H2O = UMP + diphosphate + H(+)</text>
        <dbReference type="Rhea" id="RHEA:29395"/>
        <dbReference type="ChEBI" id="CHEBI:15377"/>
        <dbReference type="ChEBI" id="CHEBI:15378"/>
        <dbReference type="ChEBI" id="CHEBI:33019"/>
        <dbReference type="ChEBI" id="CHEBI:46398"/>
        <dbReference type="ChEBI" id="CHEBI:57865"/>
        <dbReference type="EC" id="3.6.1.9"/>
    </reaction>
</comment>
<comment type="cofactor">
    <cofactor evidence="1">
        <name>a divalent metal cation</name>
        <dbReference type="ChEBI" id="CHEBI:60240"/>
    </cofactor>
</comment>
<comment type="subcellular location">
    <subcellularLocation>
        <location evidence="1">Cytoplasm</location>
    </subcellularLocation>
</comment>
<comment type="similarity">
    <text evidence="1">Belongs to the Maf family. YhdE subfamily.</text>
</comment>
<feature type="chain" id="PRO_0000267363" description="dTTP/UTP pyrophosphatase">
    <location>
        <begin position="1"/>
        <end position="220"/>
    </location>
</feature>
<feature type="active site" description="Proton acceptor" evidence="1">
    <location>
        <position position="83"/>
    </location>
</feature>
<feature type="site" description="Important for substrate specificity" evidence="1">
    <location>
        <position position="24"/>
    </location>
</feature>
<feature type="site" description="Important for substrate specificity" evidence="1">
    <location>
        <position position="84"/>
    </location>
</feature>
<feature type="site" description="Important for substrate specificity" evidence="1">
    <location>
        <position position="168"/>
    </location>
</feature>
<name>NTPPA_SYNC1</name>